<sequence>MTSAITEQLLKAKKAKGITFTELEQLLGRDEVWIASVFYRQSTASPEEAEKLLTALGLDLALADELTTPPVKGCLEPVIPTDPLIYRFYEIMQVYGLPLKDVIQEKFGDGIMSAIDFTLDVDKVEDPKGDRVKVTMCGKFLAYKKW</sequence>
<feature type="chain" id="PRO_0000187530" description="Cyanate hydratase">
    <location>
        <begin position="1"/>
        <end position="146"/>
    </location>
</feature>
<feature type="active site" evidence="1">
    <location>
        <position position="87"/>
    </location>
</feature>
<feature type="active site" evidence="1">
    <location>
        <position position="90"/>
    </location>
</feature>
<feature type="active site" evidence="1">
    <location>
        <position position="113"/>
    </location>
</feature>
<protein>
    <recommendedName>
        <fullName evidence="1">Cyanate hydratase</fullName>
        <shortName evidence="1">Cyanase</shortName>
        <ecNumber evidence="1">4.2.1.104</ecNumber>
    </recommendedName>
    <alternativeName>
        <fullName evidence="1">Cyanate hydrolase</fullName>
    </alternativeName>
    <alternativeName>
        <fullName evidence="1">Cyanate lyase</fullName>
    </alternativeName>
</protein>
<reference key="1">
    <citation type="submission" date="1996-06" db="EMBL/GenBank/DDBJ databases">
        <authorList>
            <person name="Jalali F."/>
            <person name="Espie G.S."/>
        </authorList>
    </citation>
    <scope>NUCLEOTIDE SEQUENCE [GENOMIC DNA]</scope>
</reference>
<reference key="2">
    <citation type="journal article" date="1997" name="J. Bacteriol.">
        <title>Identification and nitrogen regulation of the cyanase gene from the cyanobacteria Synechocystis sp. strain PCC 6803 and Synechococcus sp. strain PCC 7942.</title>
        <authorList>
            <person name="Harano Y."/>
            <person name="Suzuki I."/>
            <person name="Maeda S."/>
            <person name="Kaneko T."/>
            <person name="Tabata S."/>
            <person name="Omata T."/>
        </authorList>
    </citation>
    <scope>NUCLEOTIDE SEQUENCE [GENOMIC DNA]</scope>
    <scope>CHARACTERIZATION</scope>
</reference>
<reference key="3">
    <citation type="submission" date="2005-08" db="EMBL/GenBank/DDBJ databases">
        <title>Complete sequence of chromosome 1 of Synechococcus elongatus PCC 7942.</title>
        <authorList>
            <consortium name="US DOE Joint Genome Institute"/>
            <person name="Copeland A."/>
            <person name="Lucas S."/>
            <person name="Lapidus A."/>
            <person name="Barry K."/>
            <person name="Detter J.C."/>
            <person name="Glavina T."/>
            <person name="Hammon N."/>
            <person name="Israni S."/>
            <person name="Pitluck S."/>
            <person name="Schmutz J."/>
            <person name="Larimer F."/>
            <person name="Land M."/>
            <person name="Kyrpides N."/>
            <person name="Lykidis A."/>
            <person name="Golden S."/>
            <person name="Richardson P."/>
        </authorList>
    </citation>
    <scope>NUCLEOTIDE SEQUENCE [LARGE SCALE GENOMIC DNA]</scope>
    <source>
        <strain>ATCC 33912 / PCC 7942 / FACHB-805</strain>
    </source>
</reference>
<accession>Q59948</accession>
<accession>O08486</accession>
<accession>O08512</accession>
<accession>Q31LD5</accession>
<gene>
    <name evidence="1" type="primary">cynS</name>
    <name type="ordered locus">Synpcc7942_2104</name>
</gene>
<proteinExistence type="evidence at protein level"/>
<name>CYNS_SYNE7</name>
<organism>
    <name type="scientific">Synechococcus elongatus (strain ATCC 33912 / PCC 7942 / FACHB-805)</name>
    <name type="common">Anacystis nidulans R2</name>
    <dbReference type="NCBI Taxonomy" id="1140"/>
    <lineage>
        <taxon>Bacteria</taxon>
        <taxon>Bacillati</taxon>
        <taxon>Cyanobacteriota</taxon>
        <taxon>Cyanophyceae</taxon>
        <taxon>Synechococcales</taxon>
        <taxon>Synechococcaceae</taxon>
        <taxon>Synechococcus</taxon>
    </lineage>
</organism>
<comment type="function">
    <text>Catalyzes the reaction of cyanate with bicarbonate to produce ammonia and carbon dioxide.</text>
</comment>
<comment type="catalytic activity">
    <reaction evidence="1">
        <text>cyanate + hydrogencarbonate + 3 H(+) = NH4(+) + 2 CO2</text>
        <dbReference type="Rhea" id="RHEA:11120"/>
        <dbReference type="ChEBI" id="CHEBI:15378"/>
        <dbReference type="ChEBI" id="CHEBI:16526"/>
        <dbReference type="ChEBI" id="CHEBI:17544"/>
        <dbReference type="ChEBI" id="CHEBI:28938"/>
        <dbReference type="ChEBI" id="CHEBI:29195"/>
        <dbReference type="EC" id="4.2.1.104"/>
    </reaction>
</comment>
<comment type="similarity">
    <text evidence="1">Belongs to the cyanase family.</text>
</comment>
<evidence type="ECO:0000255" key="1">
    <source>
        <dbReference type="HAMAP-Rule" id="MF_00535"/>
    </source>
</evidence>
<dbReference type="EC" id="4.2.1.104" evidence="1"/>
<dbReference type="EMBL" id="U59481">
    <property type="protein sequence ID" value="AAB02940.1"/>
    <property type="molecule type" value="Genomic_DNA"/>
</dbReference>
<dbReference type="EMBL" id="AB000100">
    <property type="protein sequence ID" value="BAA19515.1"/>
    <property type="molecule type" value="Genomic_DNA"/>
</dbReference>
<dbReference type="EMBL" id="CP000100">
    <property type="protein sequence ID" value="ABB58134.1"/>
    <property type="molecule type" value="Genomic_DNA"/>
</dbReference>
<dbReference type="RefSeq" id="WP_011244299.1">
    <property type="nucleotide sequence ID" value="NZ_JACJTX010000001.1"/>
</dbReference>
<dbReference type="SMR" id="Q59948"/>
<dbReference type="STRING" id="1140.Synpcc7942_2104"/>
<dbReference type="PaxDb" id="1140-Synpcc7942_2104"/>
<dbReference type="GeneID" id="72430980"/>
<dbReference type="KEGG" id="syf:Synpcc7942_2104"/>
<dbReference type="eggNOG" id="COG1513">
    <property type="taxonomic scope" value="Bacteria"/>
</dbReference>
<dbReference type="HOGENOM" id="CLU_103452_1_0_3"/>
<dbReference type="OrthoDB" id="9785870at2"/>
<dbReference type="BioCyc" id="SYNEL:SYNPCC7942_2104-MONOMER"/>
<dbReference type="BRENDA" id="4.2.1.104">
    <property type="organism ID" value="7781"/>
</dbReference>
<dbReference type="Proteomes" id="UP000889800">
    <property type="component" value="Chromosome"/>
</dbReference>
<dbReference type="GO" id="GO:0008824">
    <property type="term" value="F:cyanate hydratase activity"/>
    <property type="evidence" value="ECO:0007669"/>
    <property type="project" value="UniProtKB-UniRule"/>
</dbReference>
<dbReference type="GO" id="GO:0003677">
    <property type="term" value="F:DNA binding"/>
    <property type="evidence" value="ECO:0007669"/>
    <property type="project" value="InterPro"/>
</dbReference>
<dbReference type="GO" id="GO:0009439">
    <property type="term" value="P:cyanate metabolic process"/>
    <property type="evidence" value="ECO:0007669"/>
    <property type="project" value="UniProtKB-UniRule"/>
</dbReference>
<dbReference type="CDD" id="cd00559">
    <property type="entry name" value="Cyanase_C"/>
    <property type="match status" value="1"/>
</dbReference>
<dbReference type="CDD" id="cd00093">
    <property type="entry name" value="HTH_XRE"/>
    <property type="match status" value="1"/>
</dbReference>
<dbReference type="Gene3D" id="3.30.1160.10">
    <property type="entry name" value="Cyanate lyase, C-terminal domain"/>
    <property type="match status" value="1"/>
</dbReference>
<dbReference type="Gene3D" id="1.10.260.40">
    <property type="entry name" value="lambda repressor-like DNA-binding domains"/>
    <property type="match status" value="1"/>
</dbReference>
<dbReference type="HAMAP" id="MF_00535">
    <property type="entry name" value="Cyanate_hydrat"/>
    <property type="match status" value="1"/>
</dbReference>
<dbReference type="InterPro" id="IPR001387">
    <property type="entry name" value="Cro/C1-type_HTH"/>
</dbReference>
<dbReference type="InterPro" id="IPR008076">
    <property type="entry name" value="Cyanase"/>
</dbReference>
<dbReference type="InterPro" id="IPR003712">
    <property type="entry name" value="Cyanate_lyase_C"/>
</dbReference>
<dbReference type="InterPro" id="IPR036581">
    <property type="entry name" value="Cyanate_lyase_C_sf"/>
</dbReference>
<dbReference type="InterPro" id="IPR010982">
    <property type="entry name" value="Lambda_DNA-bd_dom_sf"/>
</dbReference>
<dbReference type="NCBIfam" id="TIGR00673">
    <property type="entry name" value="cynS"/>
    <property type="match status" value="1"/>
</dbReference>
<dbReference type="NCBIfam" id="NF002773">
    <property type="entry name" value="PRK02866.1"/>
    <property type="match status" value="1"/>
</dbReference>
<dbReference type="PANTHER" id="PTHR34186">
    <property type="entry name" value="CYANATE HYDRATASE"/>
    <property type="match status" value="1"/>
</dbReference>
<dbReference type="PANTHER" id="PTHR34186:SF2">
    <property type="entry name" value="CYANATE HYDRATASE"/>
    <property type="match status" value="1"/>
</dbReference>
<dbReference type="Pfam" id="PF02560">
    <property type="entry name" value="Cyanate_lyase"/>
    <property type="match status" value="1"/>
</dbReference>
<dbReference type="PIRSF" id="PIRSF001263">
    <property type="entry name" value="Cyanate_hydratas"/>
    <property type="match status" value="1"/>
</dbReference>
<dbReference type="PRINTS" id="PR01693">
    <property type="entry name" value="CYANASE"/>
</dbReference>
<dbReference type="SMART" id="SM01116">
    <property type="entry name" value="Cyanate_lyase"/>
    <property type="match status" value="1"/>
</dbReference>
<dbReference type="SUPFAM" id="SSF55234">
    <property type="entry name" value="Cyanase C-terminal domain"/>
    <property type="match status" value="1"/>
</dbReference>
<dbReference type="SUPFAM" id="SSF47413">
    <property type="entry name" value="lambda repressor-like DNA-binding domains"/>
    <property type="match status" value="1"/>
</dbReference>
<keyword id="KW-0456">Lyase</keyword>
<keyword id="KW-1185">Reference proteome</keyword>